<proteinExistence type="inferred from homology"/>
<comment type="function">
    <text evidence="1">Transfers an acetyl group from acetyl-CoA to L-homoserine, forming acetyl-L-homoserine.</text>
</comment>
<comment type="catalytic activity">
    <reaction evidence="1">
        <text>L-homoserine + acetyl-CoA = O-acetyl-L-homoserine + CoA</text>
        <dbReference type="Rhea" id="RHEA:13701"/>
        <dbReference type="ChEBI" id="CHEBI:57287"/>
        <dbReference type="ChEBI" id="CHEBI:57288"/>
        <dbReference type="ChEBI" id="CHEBI:57476"/>
        <dbReference type="ChEBI" id="CHEBI:57716"/>
        <dbReference type="EC" id="2.3.1.31"/>
    </reaction>
</comment>
<comment type="pathway">
    <text evidence="1">Amino-acid biosynthesis; L-methionine biosynthesis via de novo pathway; O-acetyl-L-homoserine from L-homoserine: step 1/1.</text>
</comment>
<comment type="subcellular location">
    <subcellularLocation>
        <location evidence="1">Cytoplasm</location>
    </subcellularLocation>
</comment>
<comment type="similarity">
    <text evidence="1">Belongs to the MetA family.</text>
</comment>
<protein>
    <recommendedName>
        <fullName evidence="1">Homoserine O-acetyltransferase</fullName>
        <shortName evidence="1">HAT</shortName>
        <ecNumber evidence="1">2.3.1.31</ecNumber>
    </recommendedName>
    <alternativeName>
        <fullName evidence="1">Homoserine transacetylase</fullName>
        <shortName evidence="1">HTA</shortName>
    </alternativeName>
</protein>
<reference key="1">
    <citation type="journal article" date="2000" name="Nature">
        <title>The genome sequence of the food-borne pathogen Campylobacter jejuni reveals hypervariable sequences.</title>
        <authorList>
            <person name="Parkhill J."/>
            <person name="Wren B.W."/>
            <person name="Mungall K.L."/>
            <person name="Ketley J.M."/>
            <person name="Churcher C.M."/>
            <person name="Basham D."/>
            <person name="Chillingworth T."/>
            <person name="Davies R.M."/>
            <person name="Feltwell T."/>
            <person name="Holroyd S."/>
            <person name="Jagels K."/>
            <person name="Karlyshev A.V."/>
            <person name="Moule S."/>
            <person name="Pallen M.J."/>
            <person name="Penn C.W."/>
            <person name="Quail M.A."/>
            <person name="Rajandream M.A."/>
            <person name="Rutherford K.M."/>
            <person name="van Vliet A.H.M."/>
            <person name="Whitehead S."/>
            <person name="Barrell B.G."/>
        </authorList>
    </citation>
    <scope>NUCLEOTIDE SEQUENCE [LARGE SCALE GENOMIC DNA]</scope>
    <source>
        <strain>ATCC 700819 / NCTC 11168</strain>
    </source>
</reference>
<keyword id="KW-0012">Acyltransferase</keyword>
<keyword id="KW-0028">Amino-acid biosynthesis</keyword>
<keyword id="KW-0963">Cytoplasm</keyword>
<keyword id="KW-0486">Methionine biosynthesis</keyword>
<keyword id="KW-1185">Reference proteome</keyword>
<keyword id="KW-0808">Transferase</keyword>
<dbReference type="EC" id="2.3.1.31" evidence="1"/>
<dbReference type="EMBL" id="AL111168">
    <property type="protein sequence ID" value="CAL35820.1"/>
    <property type="molecule type" value="Genomic_DNA"/>
</dbReference>
<dbReference type="PIR" id="B81271">
    <property type="entry name" value="B81271"/>
</dbReference>
<dbReference type="RefSeq" id="WP_002783526.1">
    <property type="nucleotide sequence ID" value="NZ_SZUC01000002.1"/>
</dbReference>
<dbReference type="RefSeq" id="YP_002345092.1">
    <property type="nucleotide sequence ID" value="NC_002163.1"/>
</dbReference>
<dbReference type="SMR" id="Q9PLV2"/>
<dbReference type="IntAct" id="Q9PLV2">
    <property type="interactions" value="32"/>
</dbReference>
<dbReference type="STRING" id="192222.Cj1726c"/>
<dbReference type="PaxDb" id="192222-Cj1726c"/>
<dbReference type="EnsemblBacteria" id="CAL35820">
    <property type="protein sequence ID" value="CAL35820"/>
    <property type="gene ID" value="Cj1726c"/>
</dbReference>
<dbReference type="GeneID" id="906001"/>
<dbReference type="KEGG" id="cje:Cj1726c"/>
<dbReference type="PATRIC" id="fig|192222.6.peg.1699"/>
<dbReference type="eggNOG" id="COG1897">
    <property type="taxonomic scope" value="Bacteria"/>
</dbReference>
<dbReference type="HOGENOM" id="CLU_057851_0_1_7"/>
<dbReference type="OrthoDB" id="9772423at2"/>
<dbReference type="UniPathway" id="UPA00051">
    <property type="reaction ID" value="UER00074"/>
</dbReference>
<dbReference type="Proteomes" id="UP000000799">
    <property type="component" value="Chromosome"/>
</dbReference>
<dbReference type="GO" id="GO:0005737">
    <property type="term" value="C:cytoplasm"/>
    <property type="evidence" value="ECO:0007669"/>
    <property type="project" value="UniProtKB-SubCell"/>
</dbReference>
<dbReference type="GO" id="GO:0004414">
    <property type="term" value="F:homoserine O-acetyltransferase activity"/>
    <property type="evidence" value="ECO:0007669"/>
    <property type="project" value="UniProtKB-EC"/>
</dbReference>
<dbReference type="GO" id="GO:0008899">
    <property type="term" value="F:homoserine O-succinyltransferase activity"/>
    <property type="evidence" value="ECO:0007669"/>
    <property type="project" value="UniProtKB-UniRule"/>
</dbReference>
<dbReference type="GO" id="GO:0019281">
    <property type="term" value="P:L-methionine biosynthetic process from homoserine via O-succinyl-L-homoserine and cystathionine"/>
    <property type="evidence" value="ECO:0007669"/>
    <property type="project" value="InterPro"/>
</dbReference>
<dbReference type="CDD" id="cd03131">
    <property type="entry name" value="GATase1_HTS"/>
    <property type="match status" value="1"/>
</dbReference>
<dbReference type="Gene3D" id="3.40.50.880">
    <property type="match status" value="1"/>
</dbReference>
<dbReference type="HAMAP" id="MF_00295">
    <property type="entry name" value="MetA_acyltransf"/>
    <property type="match status" value="1"/>
</dbReference>
<dbReference type="InterPro" id="IPR029062">
    <property type="entry name" value="Class_I_gatase-like"/>
</dbReference>
<dbReference type="InterPro" id="IPR005697">
    <property type="entry name" value="HST_MetA"/>
</dbReference>
<dbReference type="InterPro" id="IPR033752">
    <property type="entry name" value="MetA_family"/>
</dbReference>
<dbReference type="NCBIfam" id="TIGR01001">
    <property type="entry name" value="metA"/>
    <property type="match status" value="1"/>
</dbReference>
<dbReference type="PANTHER" id="PTHR20919">
    <property type="entry name" value="HOMOSERINE O-SUCCINYLTRANSFERASE"/>
    <property type="match status" value="1"/>
</dbReference>
<dbReference type="PANTHER" id="PTHR20919:SF0">
    <property type="entry name" value="HOMOSERINE O-SUCCINYLTRANSFERASE"/>
    <property type="match status" value="1"/>
</dbReference>
<dbReference type="Pfam" id="PF04204">
    <property type="entry name" value="HTS"/>
    <property type="match status" value="1"/>
</dbReference>
<dbReference type="PIRSF" id="PIRSF000450">
    <property type="entry name" value="H_ser_succinyltr"/>
    <property type="match status" value="1"/>
</dbReference>
<dbReference type="SUPFAM" id="SSF52317">
    <property type="entry name" value="Class I glutamine amidotransferase-like"/>
    <property type="match status" value="1"/>
</dbReference>
<gene>
    <name evidence="1" type="primary">metAA</name>
    <name type="synonym">metA</name>
    <name type="ordered locus">Cj1726c</name>
</gene>
<feature type="chain" id="PRO_0000199745" description="Homoserine O-acetyltransferase">
    <location>
        <begin position="1"/>
        <end position="293"/>
    </location>
</feature>
<feature type="active site" description="Acyl-thioester intermediate" evidence="1">
    <location>
        <position position="141"/>
    </location>
</feature>
<feature type="active site" description="Proton acceptor" evidence="1">
    <location>
        <position position="234"/>
    </location>
</feature>
<feature type="active site" evidence="1">
    <location>
        <position position="236"/>
    </location>
</feature>
<feature type="binding site" evidence="1">
    <location>
        <position position="162"/>
    </location>
    <ligand>
        <name>substrate</name>
    </ligand>
</feature>
<feature type="binding site" evidence="1">
    <location>
        <position position="190"/>
    </location>
    <ligand>
        <name>substrate</name>
    </ligand>
</feature>
<feature type="binding site" evidence="1">
    <location>
        <position position="248"/>
    </location>
    <ligand>
        <name>substrate</name>
    </ligand>
</feature>
<feature type="site" description="Important for acyl-CoA specificity" evidence="1">
    <location>
        <position position="110"/>
    </location>
</feature>
<feature type="site" description="Important for substrate specificity" evidence="1">
    <location>
        <position position="190"/>
    </location>
</feature>
<organism>
    <name type="scientific">Campylobacter jejuni subsp. jejuni serotype O:2 (strain ATCC 700819 / NCTC 11168)</name>
    <dbReference type="NCBI Taxonomy" id="192222"/>
    <lineage>
        <taxon>Bacteria</taxon>
        <taxon>Pseudomonadati</taxon>
        <taxon>Campylobacterota</taxon>
        <taxon>Epsilonproteobacteria</taxon>
        <taxon>Campylobacterales</taxon>
        <taxon>Campylobacteraceae</taxon>
        <taxon>Campylobacter</taxon>
    </lineage>
</organism>
<accession>Q9PLV2</accession>
<accession>Q0P7Q5</accession>
<sequence>MPLIIPENIPAYELLKEHAFIMGLRRAKHQDIRPQEILIVNLMPKKIETENQILSLLANSPLQVNITLLATTSYVGKNTPFTHLEKFYKGLEEVKKHKFDGAIVTGAPVEQMDFEKVAYWEELLEIFDFLKQNVTSSMYICWGAMAALKYFYGVDKISLDKKIFGVYKHDKVSPDLLLTNLDEKVLMPHSRHSSMDEEQILALQKQGKLKILLRNKKIGSALLRDEKNIFILGHLEYFKETLHQEYVRDNFIQKAKNYYDKKGNIKYNWRSNANTIFANWLNYDVYQSTPFVL</sequence>
<name>METAA_CAMJE</name>
<evidence type="ECO:0000255" key="1">
    <source>
        <dbReference type="HAMAP-Rule" id="MF_00295"/>
    </source>
</evidence>